<gene>
    <name evidence="1" type="primary">mqo</name>
    <name type="ordered locus">BCE_3011</name>
</gene>
<name>MQO_BACC1</name>
<reference key="1">
    <citation type="journal article" date="2004" name="Nucleic Acids Res.">
        <title>The genome sequence of Bacillus cereus ATCC 10987 reveals metabolic adaptations and a large plasmid related to Bacillus anthracis pXO1.</title>
        <authorList>
            <person name="Rasko D.A."/>
            <person name="Ravel J."/>
            <person name="Oekstad O.A."/>
            <person name="Helgason E."/>
            <person name="Cer R.Z."/>
            <person name="Jiang L."/>
            <person name="Shores K.A."/>
            <person name="Fouts D.E."/>
            <person name="Tourasse N.J."/>
            <person name="Angiuoli S.V."/>
            <person name="Kolonay J.F."/>
            <person name="Nelson W.C."/>
            <person name="Kolstoe A.-B."/>
            <person name="Fraser C.M."/>
            <person name="Read T.D."/>
        </authorList>
    </citation>
    <scope>NUCLEOTIDE SEQUENCE [LARGE SCALE GENOMIC DNA]</scope>
    <source>
        <strain>ATCC 10987 / NRS 248</strain>
    </source>
</reference>
<dbReference type="EC" id="1.1.5.4" evidence="1"/>
<dbReference type="EMBL" id="AE017194">
    <property type="protein sequence ID" value="AAS41922.1"/>
    <property type="molecule type" value="Genomic_DNA"/>
</dbReference>
<dbReference type="SMR" id="Q735Z0"/>
<dbReference type="KEGG" id="bca:BCE_3011"/>
<dbReference type="HOGENOM" id="CLU_028151_0_0_9"/>
<dbReference type="UniPathway" id="UPA00223">
    <property type="reaction ID" value="UER01008"/>
</dbReference>
<dbReference type="Proteomes" id="UP000002527">
    <property type="component" value="Chromosome"/>
</dbReference>
<dbReference type="GO" id="GO:0047545">
    <property type="term" value="F:2-hydroxyglutarate dehydrogenase activity"/>
    <property type="evidence" value="ECO:0007669"/>
    <property type="project" value="TreeGrafter"/>
</dbReference>
<dbReference type="GO" id="GO:0008924">
    <property type="term" value="F:L-malate dehydrogenase (quinone) activity"/>
    <property type="evidence" value="ECO:0007669"/>
    <property type="project" value="UniProtKB-UniRule"/>
</dbReference>
<dbReference type="GO" id="GO:0006099">
    <property type="term" value="P:tricarboxylic acid cycle"/>
    <property type="evidence" value="ECO:0007669"/>
    <property type="project" value="UniProtKB-UniRule"/>
</dbReference>
<dbReference type="HAMAP" id="MF_00212">
    <property type="entry name" value="MQO"/>
    <property type="match status" value="1"/>
</dbReference>
<dbReference type="InterPro" id="IPR036188">
    <property type="entry name" value="FAD/NAD-bd_sf"/>
</dbReference>
<dbReference type="InterPro" id="IPR006231">
    <property type="entry name" value="MQO"/>
</dbReference>
<dbReference type="NCBIfam" id="TIGR01320">
    <property type="entry name" value="mal_quin_oxido"/>
    <property type="match status" value="1"/>
</dbReference>
<dbReference type="NCBIfam" id="NF003603">
    <property type="entry name" value="PRK05257.1-1"/>
    <property type="match status" value="1"/>
</dbReference>
<dbReference type="NCBIfam" id="NF003604">
    <property type="entry name" value="PRK05257.1-3"/>
    <property type="match status" value="1"/>
</dbReference>
<dbReference type="NCBIfam" id="NF003605">
    <property type="entry name" value="PRK05257.1-4"/>
    <property type="match status" value="1"/>
</dbReference>
<dbReference type="NCBIfam" id="NF003606">
    <property type="entry name" value="PRK05257.2-1"/>
    <property type="match status" value="1"/>
</dbReference>
<dbReference type="NCBIfam" id="NF003608">
    <property type="entry name" value="PRK05257.2-4"/>
    <property type="match status" value="1"/>
</dbReference>
<dbReference type="NCBIfam" id="NF003610">
    <property type="entry name" value="PRK05257.3-1"/>
    <property type="match status" value="1"/>
</dbReference>
<dbReference type="NCBIfam" id="NF003611">
    <property type="entry name" value="PRK05257.3-2"/>
    <property type="match status" value="1"/>
</dbReference>
<dbReference type="NCBIfam" id="NF009875">
    <property type="entry name" value="PRK13339.1"/>
    <property type="match status" value="1"/>
</dbReference>
<dbReference type="PANTHER" id="PTHR43104">
    <property type="entry name" value="L-2-HYDROXYGLUTARATE DEHYDROGENASE, MITOCHONDRIAL"/>
    <property type="match status" value="1"/>
</dbReference>
<dbReference type="PANTHER" id="PTHR43104:SF2">
    <property type="entry name" value="L-2-HYDROXYGLUTARATE DEHYDROGENASE, MITOCHONDRIAL"/>
    <property type="match status" value="1"/>
</dbReference>
<dbReference type="Pfam" id="PF06039">
    <property type="entry name" value="Mqo"/>
    <property type="match status" value="1"/>
</dbReference>
<dbReference type="SUPFAM" id="SSF51905">
    <property type="entry name" value="FAD/NAD(P)-binding domain"/>
    <property type="match status" value="1"/>
</dbReference>
<comment type="catalytic activity">
    <reaction evidence="1">
        <text>(S)-malate + a quinone = a quinol + oxaloacetate</text>
        <dbReference type="Rhea" id="RHEA:46012"/>
        <dbReference type="ChEBI" id="CHEBI:15589"/>
        <dbReference type="ChEBI" id="CHEBI:16452"/>
        <dbReference type="ChEBI" id="CHEBI:24646"/>
        <dbReference type="ChEBI" id="CHEBI:132124"/>
        <dbReference type="EC" id="1.1.5.4"/>
    </reaction>
</comment>
<comment type="cofactor">
    <cofactor evidence="1">
        <name>FAD</name>
        <dbReference type="ChEBI" id="CHEBI:57692"/>
    </cofactor>
</comment>
<comment type="pathway">
    <text evidence="1">Carbohydrate metabolism; tricarboxylic acid cycle; oxaloacetate from (S)-malate (quinone route): step 1/1.</text>
</comment>
<comment type="similarity">
    <text evidence="1">Belongs to the MQO family.</text>
</comment>
<accession>Q735Z0</accession>
<feature type="chain" id="PRO_1000023791" description="Probable malate:quinone oxidoreductase">
    <location>
        <begin position="1"/>
        <end position="500"/>
    </location>
</feature>
<proteinExistence type="inferred from homology"/>
<evidence type="ECO:0000255" key="1">
    <source>
        <dbReference type="HAMAP-Rule" id="MF_00212"/>
    </source>
</evidence>
<sequence length="500" mass="55180">MSNMQQKTDVILIGAGIMSATLGSLLKELAPEWEIKVFEKLASAGEESSNEWNNAGTGHSALCELNYTSEKSDGSIDISKAVKVNEQFQLSRQFWAYLVKSKLIRNPQDFIMPLPHMSLVQGEKNVQFLKNRFEALSKNPLFQGMEFSDAPETLKKWLPLIMEGRTSNEPMAATKIDSGTDVNFGALTRMLFDYLKTKDVELNYKHSVENIKRTKNGLWEVKVHDMNSGKIEHHTAKFVFIGGGGGSLPLLQKTGIPESKHIGGFPVSGLFMVCKNQKVVEQHHAKVYGKAKVGAPPMSVPHLDTRYIDNKKALLFGPFAGFSPKFLKTGSNLDLIGSVKPNNVLTMLAAGVKEMGLTKYLIQQVMLSHEKRMEELREFIPNAKSEDWDIVVAGQRVQVIKDTDAGGKGTLQFGTEVVSAADGSIAALLGASPGASTAVHVMLEVLEKCFPSRMVEWEGKIKEMIPSYGISLTENPRLFQDLHTSTGRTLGLNEKETVHN</sequence>
<keyword id="KW-0274">FAD</keyword>
<keyword id="KW-0285">Flavoprotein</keyword>
<keyword id="KW-0560">Oxidoreductase</keyword>
<keyword id="KW-0816">Tricarboxylic acid cycle</keyword>
<protein>
    <recommendedName>
        <fullName evidence="1">Probable malate:quinone oxidoreductase</fullName>
        <ecNumber evidence="1">1.1.5.4</ecNumber>
    </recommendedName>
    <alternativeName>
        <fullName evidence="1">MQO</fullName>
    </alternativeName>
    <alternativeName>
        <fullName evidence="1">Malate dehydrogenase [quinone]</fullName>
    </alternativeName>
</protein>
<organism>
    <name type="scientific">Bacillus cereus (strain ATCC 10987 / NRS 248)</name>
    <dbReference type="NCBI Taxonomy" id="222523"/>
    <lineage>
        <taxon>Bacteria</taxon>
        <taxon>Bacillati</taxon>
        <taxon>Bacillota</taxon>
        <taxon>Bacilli</taxon>
        <taxon>Bacillales</taxon>
        <taxon>Bacillaceae</taxon>
        <taxon>Bacillus</taxon>
        <taxon>Bacillus cereus group</taxon>
    </lineage>
</organism>